<keyword id="KW-0119">Carbohydrate metabolism</keyword>
<keyword id="KW-0378">Hydrolase</keyword>
<keyword id="KW-0460">Magnesium</keyword>
<keyword id="KW-0479">Metal-binding</keyword>
<dbReference type="EC" id="3.1.3.18" evidence="1"/>
<dbReference type="EMBL" id="CP000562">
    <property type="protein sequence ID" value="ABN57845.1"/>
    <property type="molecule type" value="Genomic_DNA"/>
</dbReference>
<dbReference type="RefSeq" id="WP_011844754.1">
    <property type="nucleotide sequence ID" value="NC_009051.1"/>
</dbReference>
<dbReference type="SMR" id="A3CWU5"/>
<dbReference type="STRING" id="368407.Memar_1919"/>
<dbReference type="GeneID" id="4848339"/>
<dbReference type="KEGG" id="mem:Memar_1919"/>
<dbReference type="eggNOG" id="arCOG01213">
    <property type="taxonomic scope" value="Archaea"/>
</dbReference>
<dbReference type="HOGENOM" id="CLU_044146_2_0_2"/>
<dbReference type="OrthoDB" id="120822at2157"/>
<dbReference type="Proteomes" id="UP000002146">
    <property type="component" value="Chromosome"/>
</dbReference>
<dbReference type="GO" id="GO:0005829">
    <property type="term" value="C:cytosol"/>
    <property type="evidence" value="ECO:0007669"/>
    <property type="project" value="TreeGrafter"/>
</dbReference>
<dbReference type="GO" id="GO:0000287">
    <property type="term" value="F:magnesium ion binding"/>
    <property type="evidence" value="ECO:0007669"/>
    <property type="project" value="InterPro"/>
</dbReference>
<dbReference type="GO" id="GO:0008967">
    <property type="term" value="F:phosphoglycolate phosphatase activity"/>
    <property type="evidence" value="ECO:0007669"/>
    <property type="project" value="UniProtKB-UniRule"/>
</dbReference>
<dbReference type="CDD" id="cd07514">
    <property type="entry name" value="HAD_Pase"/>
    <property type="match status" value="1"/>
</dbReference>
<dbReference type="Gene3D" id="3.90.1070.10">
    <property type="match status" value="1"/>
</dbReference>
<dbReference type="Gene3D" id="3.40.50.1000">
    <property type="entry name" value="HAD superfamily/HAD-like"/>
    <property type="match status" value="1"/>
</dbReference>
<dbReference type="HAMAP" id="MF_01419">
    <property type="entry name" value="GPH_hydrolase_arch"/>
    <property type="match status" value="1"/>
</dbReference>
<dbReference type="InterPro" id="IPR036412">
    <property type="entry name" value="HAD-like_sf"/>
</dbReference>
<dbReference type="InterPro" id="IPR006379">
    <property type="entry name" value="HAD-SF_hydro_IIB"/>
</dbReference>
<dbReference type="InterPro" id="IPR023214">
    <property type="entry name" value="HAD_sf"/>
</dbReference>
<dbReference type="InterPro" id="IPR006382">
    <property type="entry name" value="PGPase"/>
</dbReference>
<dbReference type="NCBIfam" id="TIGR01484">
    <property type="entry name" value="HAD-SF-IIB"/>
    <property type="match status" value="1"/>
</dbReference>
<dbReference type="NCBIfam" id="TIGR01487">
    <property type="entry name" value="Pglycolate_arch"/>
    <property type="match status" value="1"/>
</dbReference>
<dbReference type="NCBIfam" id="NF002245">
    <property type="entry name" value="PRK01158.1"/>
    <property type="match status" value="1"/>
</dbReference>
<dbReference type="NCBIfam" id="TIGR01482">
    <property type="entry name" value="SPP-subfamily"/>
    <property type="match status" value="1"/>
</dbReference>
<dbReference type="PANTHER" id="PTHR10000:SF8">
    <property type="entry name" value="HAD SUPERFAMILY HYDROLASE-LIKE, TYPE 3"/>
    <property type="match status" value="1"/>
</dbReference>
<dbReference type="PANTHER" id="PTHR10000">
    <property type="entry name" value="PHOSPHOSERINE PHOSPHATASE"/>
    <property type="match status" value="1"/>
</dbReference>
<dbReference type="Pfam" id="PF08282">
    <property type="entry name" value="Hydrolase_3"/>
    <property type="match status" value="2"/>
</dbReference>
<dbReference type="SFLD" id="SFLDG01144">
    <property type="entry name" value="C2.B.4:_PGP_Like"/>
    <property type="match status" value="1"/>
</dbReference>
<dbReference type="SFLD" id="SFLDF00446">
    <property type="entry name" value="phosphoglycolate_phosphatase_3"/>
    <property type="match status" value="1"/>
</dbReference>
<dbReference type="SUPFAM" id="SSF56784">
    <property type="entry name" value="HAD-like"/>
    <property type="match status" value="1"/>
</dbReference>
<gene>
    <name type="ordered locus">Memar_1919</name>
</gene>
<evidence type="ECO:0000255" key="1">
    <source>
        <dbReference type="HAMAP-Rule" id="MF_01419"/>
    </source>
</evidence>
<protein>
    <recommendedName>
        <fullName evidence="1">Phosphoglycolate phosphatase</fullName>
        <shortName evidence="1">PGP</shortName>
        <shortName evidence="1">PGPase</shortName>
        <ecNumber evidence="1">3.1.3.18</ecNumber>
    </recommendedName>
</protein>
<feature type="chain" id="PRO_1000024291" description="Phosphoglycolate phosphatase">
    <location>
        <begin position="1"/>
        <end position="234"/>
    </location>
</feature>
<feature type="active site" description="Nucleophile" evidence="1">
    <location>
        <position position="8"/>
    </location>
</feature>
<feature type="binding site" evidence="1">
    <location>
        <position position="8"/>
    </location>
    <ligand>
        <name>Mg(2+)</name>
        <dbReference type="ChEBI" id="CHEBI:18420"/>
    </ligand>
</feature>
<feature type="binding site" evidence="1">
    <location>
        <position position="10"/>
    </location>
    <ligand>
        <name>Mg(2+)</name>
        <dbReference type="ChEBI" id="CHEBI:18420"/>
    </ligand>
</feature>
<feature type="binding site" evidence="1">
    <location>
        <position position="157"/>
    </location>
    <ligand>
        <name>substrate</name>
    </ligand>
</feature>
<feature type="binding site" evidence="1">
    <location>
        <position position="180"/>
    </location>
    <ligand>
        <name>Mg(2+)</name>
        <dbReference type="ChEBI" id="CHEBI:18420"/>
    </ligand>
</feature>
<feature type="binding site" evidence="1">
    <location>
        <position position="184"/>
    </location>
    <ligand>
        <name>Mg(2+)</name>
        <dbReference type="ChEBI" id="CHEBI:18420"/>
    </ligand>
</feature>
<accession>A3CWU5</accession>
<proteinExistence type="inferred from homology"/>
<organism>
    <name type="scientific">Methanoculleus marisnigri (strain ATCC 35101 / DSM 1498 / JR1)</name>
    <dbReference type="NCBI Taxonomy" id="368407"/>
    <lineage>
        <taxon>Archaea</taxon>
        <taxon>Methanobacteriati</taxon>
        <taxon>Methanobacteriota</taxon>
        <taxon>Stenosarchaea group</taxon>
        <taxon>Methanomicrobia</taxon>
        <taxon>Methanomicrobiales</taxon>
        <taxon>Methanomicrobiaceae</taxon>
        <taxon>Methanoculleus</taxon>
    </lineage>
</organism>
<sequence>MLKTLVTDVDGTITDRRRRINTAAVETIRTLVDAGIEVVLASGNTVCFMDGLCKMVGTDGTIIGENGGVYRRGFSGTLRIPGDQEVCREAFKVLNDYFAGKGVELELYSAQYRFADVAFARNIDPDEARAIIRDHGLPVRVLDTGFAIHLQTPGVSKGTALVELAREMGLSPSEMMAVGDSENDIEMLEAAGIGVAVRNAPVRTLSAADWVSEEGYGDGFVEAVKKYYPYLFSR</sequence>
<reference key="1">
    <citation type="journal article" date="2009" name="Stand. Genomic Sci.">
        <title>Complete genome sequence of Methanoculleus marisnigri Romesser et al. 1981 type strain JR1.</title>
        <authorList>
            <person name="Anderson I.J."/>
            <person name="Sieprawska-Lupa M."/>
            <person name="Lapidus A."/>
            <person name="Nolan M."/>
            <person name="Copeland A."/>
            <person name="Glavina Del Rio T."/>
            <person name="Tice H."/>
            <person name="Dalin E."/>
            <person name="Barry K."/>
            <person name="Saunders E."/>
            <person name="Han C."/>
            <person name="Brettin T."/>
            <person name="Detter J.C."/>
            <person name="Bruce D."/>
            <person name="Mikhailova N."/>
            <person name="Pitluck S."/>
            <person name="Hauser L."/>
            <person name="Land M."/>
            <person name="Lucas S."/>
            <person name="Richardson P."/>
            <person name="Whitman W.B."/>
            <person name="Kyrpides N.C."/>
        </authorList>
    </citation>
    <scope>NUCLEOTIDE SEQUENCE [LARGE SCALE GENOMIC DNA]</scope>
    <source>
        <strain>ATCC 35101 / DSM 1498 / JR1</strain>
    </source>
</reference>
<comment type="function">
    <text evidence="1">Catalyzes the dephosphorylation of 2-phosphoglycolate.</text>
</comment>
<comment type="catalytic activity">
    <reaction evidence="1">
        <text>2-phosphoglycolate + H2O = glycolate + phosphate</text>
        <dbReference type="Rhea" id="RHEA:14369"/>
        <dbReference type="ChEBI" id="CHEBI:15377"/>
        <dbReference type="ChEBI" id="CHEBI:29805"/>
        <dbReference type="ChEBI" id="CHEBI:43474"/>
        <dbReference type="ChEBI" id="CHEBI:58033"/>
        <dbReference type="EC" id="3.1.3.18"/>
    </reaction>
</comment>
<comment type="cofactor">
    <cofactor evidence="1">
        <name>Mg(2+)</name>
        <dbReference type="ChEBI" id="CHEBI:18420"/>
    </cofactor>
</comment>
<comment type="similarity">
    <text evidence="1">Belongs to the archaeal SPP-like hydrolase family.</text>
</comment>
<name>PGP_METMJ</name>